<evidence type="ECO:0000255" key="1">
    <source>
        <dbReference type="HAMAP-Rule" id="MF_00639"/>
    </source>
</evidence>
<sequence>MFGDRQRPMVLVLGLGESGLAIARWCARHGCRLRIADTREAPPNLAALQAEGIDAEFVGGAFTPALLDGGVEIVGLSPGLSPLEPALAALVAAANERGVAVWGELEFFAQALRALGTSGYQPKVLAITGTNGKTTTTSLTGLLCQRSGKKVAVAGNISPAMLDRLASAIDETALPDVWVLELSSFQLETARTFAPDAAAILNITQDHLDWHGSFDAYAQAKGRIFGATTTRVLNRDDAAVMKFAPAVAAADAPRTVTFGLNEPTQDGDYGLSRDNGIAWLVEAVDRDAPDEATTTRRRKRDAAHTPDIAQKRLMPADALRIRGLHNAANALAAFALARAIDLPAAPLLHALREYRGEAHRVEVIATIDDVDYVDDSKGTNVGATVAALDGLAQKIVLIAGGDGKGQDFAPLVAPVARWCRAVMLIGRDAPVIRDTLAETGVPLADHATLEAAVHAAAELAEPGDAVLLSPACASLDMFRNYAHRAEVFRAAVDAIAIDKGATP</sequence>
<reference key="1">
    <citation type="submission" date="2006-05" db="EMBL/GenBank/DDBJ databases">
        <title>Complete sequence of chromosome 1 of Burkholderia cenocepacia AU 1054.</title>
        <authorList>
            <consortium name="US DOE Joint Genome Institute"/>
            <person name="Copeland A."/>
            <person name="Lucas S."/>
            <person name="Lapidus A."/>
            <person name="Barry K."/>
            <person name="Detter J.C."/>
            <person name="Glavina del Rio T."/>
            <person name="Hammon N."/>
            <person name="Israni S."/>
            <person name="Dalin E."/>
            <person name="Tice H."/>
            <person name="Pitluck S."/>
            <person name="Chain P."/>
            <person name="Malfatti S."/>
            <person name="Shin M."/>
            <person name="Vergez L."/>
            <person name="Schmutz J."/>
            <person name="Larimer F."/>
            <person name="Land M."/>
            <person name="Hauser L."/>
            <person name="Kyrpides N."/>
            <person name="Lykidis A."/>
            <person name="LiPuma J.J."/>
            <person name="Konstantinidis K."/>
            <person name="Tiedje J.M."/>
            <person name="Richardson P."/>
        </authorList>
    </citation>
    <scope>NUCLEOTIDE SEQUENCE [LARGE SCALE GENOMIC DNA]</scope>
    <source>
        <strain>AU 1054</strain>
    </source>
</reference>
<dbReference type="EC" id="6.3.2.9" evidence="1"/>
<dbReference type="EMBL" id="CP000378">
    <property type="protein sequence ID" value="ABF74990.1"/>
    <property type="molecule type" value="Genomic_DNA"/>
</dbReference>
<dbReference type="SMR" id="Q1BZG5"/>
<dbReference type="HOGENOM" id="CLU_032540_1_1_4"/>
<dbReference type="UniPathway" id="UPA00219"/>
<dbReference type="GO" id="GO:0005737">
    <property type="term" value="C:cytoplasm"/>
    <property type="evidence" value="ECO:0007669"/>
    <property type="project" value="UniProtKB-SubCell"/>
</dbReference>
<dbReference type="GO" id="GO:0005524">
    <property type="term" value="F:ATP binding"/>
    <property type="evidence" value="ECO:0007669"/>
    <property type="project" value="UniProtKB-UniRule"/>
</dbReference>
<dbReference type="GO" id="GO:0008764">
    <property type="term" value="F:UDP-N-acetylmuramoylalanine-D-glutamate ligase activity"/>
    <property type="evidence" value="ECO:0007669"/>
    <property type="project" value="UniProtKB-UniRule"/>
</dbReference>
<dbReference type="GO" id="GO:0051301">
    <property type="term" value="P:cell division"/>
    <property type="evidence" value="ECO:0007669"/>
    <property type="project" value="UniProtKB-KW"/>
</dbReference>
<dbReference type="GO" id="GO:0071555">
    <property type="term" value="P:cell wall organization"/>
    <property type="evidence" value="ECO:0007669"/>
    <property type="project" value="UniProtKB-KW"/>
</dbReference>
<dbReference type="GO" id="GO:0009252">
    <property type="term" value="P:peptidoglycan biosynthetic process"/>
    <property type="evidence" value="ECO:0007669"/>
    <property type="project" value="UniProtKB-UniRule"/>
</dbReference>
<dbReference type="GO" id="GO:0008360">
    <property type="term" value="P:regulation of cell shape"/>
    <property type="evidence" value="ECO:0007669"/>
    <property type="project" value="UniProtKB-KW"/>
</dbReference>
<dbReference type="Gene3D" id="3.90.190.20">
    <property type="entry name" value="Mur ligase, C-terminal domain"/>
    <property type="match status" value="1"/>
</dbReference>
<dbReference type="Gene3D" id="3.40.1190.10">
    <property type="entry name" value="Mur-like, catalytic domain"/>
    <property type="match status" value="1"/>
</dbReference>
<dbReference type="Gene3D" id="3.40.50.720">
    <property type="entry name" value="NAD(P)-binding Rossmann-like Domain"/>
    <property type="match status" value="1"/>
</dbReference>
<dbReference type="HAMAP" id="MF_00639">
    <property type="entry name" value="MurD"/>
    <property type="match status" value="1"/>
</dbReference>
<dbReference type="InterPro" id="IPR036565">
    <property type="entry name" value="Mur-like_cat_sf"/>
</dbReference>
<dbReference type="InterPro" id="IPR004101">
    <property type="entry name" value="Mur_ligase_C"/>
</dbReference>
<dbReference type="InterPro" id="IPR036615">
    <property type="entry name" value="Mur_ligase_C_dom_sf"/>
</dbReference>
<dbReference type="InterPro" id="IPR013221">
    <property type="entry name" value="Mur_ligase_cen"/>
</dbReference>
<dbReference type="InterPro" id="IPR005762">
    <property type="entry name" value="MurD"/>
</dbReference>
<dbReference type="NCBIfam" id="TIGR01087">
    <property type="entry name" value="murD"/>
    <property type="match status" value="1"/>
</dbReference>
<dbReference type="PANTHER" id="PTHR43692">
    <property type="entry name" value="UDP-N-ACETYLMURAMOYLALANINE--D-GLUTAMATE LIGASE"/>
    <property type="match status" value="1"/>
</dbReference>
<dbReference type="PANTHER" id="PTHR43692:SF1">
    <property type="entry name" value="UDP-N-ACETYLMURAMOYLALANINE--D-GLUTAMATE LIGASE"/>
    <property type="match status" value="1"/>
</dbReference>
<dbReference type="Pfam" id="PF02875">
    <property type="entry name" value="Mur_ligase_C"/>
    <property type="match status" value="1"/>
</dbReference>
<dbReference type="Pfam" id="PF08245">
    <property type="entry name" value="Mur_ligase_M"/>
    <property type="match status" value="1"/>
</dbReference>
<dbReference type="Pfam" id="PF21799">
    <property type="entry name" value="MurD-like_N"/>
    <property type="match status" value="1"/>
</dbReference>
<dbReference type="SUPFAM" id="SSF51984">
    <property type="entry name" value="MurCD N-terminal domain"/>
    <property type="match status" value="1"/>
</dbReference>
<dbReference type="SUPFAM" id="SSF53623">
    <property type="entry name" value="MurD-like peptide ligases, catalytic domain"/>
    <property type="match status" value="1"/>
</dbReference>
<dbReference type="SUPFAM" id="SSF53244">
    <property type="entry name" value="MurD-like peptide ligases, peptide-binding domain"/>
    <property type="match status" value="1"/>
</dbReference>
<proteinExistence type="inferred from homology"/>
<organism>
    <name type="scientific">Burkholderia orbicola (strain AU 1054)</name>
    <dbReference type="NCBI Taxonomy" id="331271"/>
    <lineage>
        <taxon>Bacteria</taxon>
        <taxon>Pseudomonadati</taxon>
        <taxon>Pseudomonadota</taxon>
        <taxon>Betaproteobacteria</taxon>
        <taxon>Burkholderiales</taxon>
        <taxon>Burkholderiaceae</taxon>
        <taxon>Burkholderia</taxon>
        <taxon>Burkholderia cepacia complex</taxon>
        <taxon>Burkholderia orbicola</taxon>
    </lineage>
</organism>
<feature type="chain" id="PRO_0000257170" description="UDP-N-acetylmuramoylalanine--D-glutamate ligase">
    <location>
        <begin position="1"/>
        <end position="503"/>
    </location>
</feature>
<feature type="binding site" evidence="1">
    <location>
        <begin position="129"/>
        <end position="135"/>
    </location>
    <ligand>
        <name>ATP</name>
        <dbReference type="ChEBI" id="CHEBI:30616"/>
    </ligand>
</feature>
<protein>
    <recommendedName>
        <fullName evidence="1">UDP-N-acetylmuramoylalanine--D-glutamate ligase</fullName>
        <ecNumber evidence="1">6.3.2.9</ecNumber>
    </recommendedName>
    <alternativeName>
        <fullName evidence="1">D-glutamic acid-adding enzyme</fullName>
    </alternativeName>
    <alternativeName>
        <fullName evidence="1">UDP-N-acetylmuramoyl-L-alanyl-D-glutamate synthetase</fullName>
    </alternativeName>
</protein>
<comment type="function">
    <text evidence="1">Cell wall formation. Catalyzes the addition of glutamate to the nucleotide precursor UDP-N-acetylmuramoyl-L-alanine (UMA).</text>
</comment>
<comment type="catalytic activity">
    <reaction evidence="1">
        <text>UDP-N-acetyl-alpha-D-muramoyl-L-alanine + D-glutamate + ATP = UDP-N-acetyl-alpha-D-muramoyl-L-alanyl-D-glutamate + ADP + phosphate + H(+)</text>
        <dbReference type="Rhea" id="RHEA:16429"/>
        <dbReference type="ChEBI" id="CHEBI:15378"/>
        <dbReference type="ChEBI" id="CHEBI:29986"/>
        <dbReference type="ChEBI" id="CHEBI:30616"/>
        <dbReference type="ChEBI" id="CHEBI:43474"/>
        <dbReference type="ChEBI" id="CHEBI:83898"/>
        <dbReference type="ChEBI" id="CHEBI:83900"/>
        <dbReference type="ChEBI" id="CHEBI:456216"/>
        <dbReference type="EC" id="6.3.2.9"/>
    </reaction>
</comment>
<comment type="pathway">
    <text evidence="1">Cell wall biogenesis; peptidoglycan biosynthesis.</text>
</comment>
<comment type="subcellular location">
    <subcellularLocation>
        <location evidence="1">Cytoplasm</location>
    </subcellularLocation>
</comment>
<comment type="similarity">
    <text evidence="1">Belongs to the MurCDEF family.</text>
</comment>
<keyword id="KW-0067">ATP-binding</keyword>
<keyword id="KW-0131">Cell cycle</keyword>
<keyword id="KW-0132">Cell division</keyword>
<keyword id="KW-0133">Cell shape</keyword>
<keyword id="KW-0961">Cell wall biogenesis/degradation</keyword>
<keyword id="KW-0963">Cytoplasm</keyword>
<keyword id="KW-0436">Ligase</keyword>
<keyword id="KW-0547">Nucleotide-binding</keyword>
<keyword id="KW-0573">Peptidoglycan synthesis</keyword>
<name>MURD_BURO1</name>
<accession>Q1BZG5</accession>
<gene>
    <name evidence="1" type="primary">murD</name>
    <name type="ordered locus">Bcen_0075</name>
</gene>